<keyword id="KW-0143">Chaperone</keyword>
<keyword id="KW-1015">Disulfide bond</keyword>
<keyword id="KW-0256">Endoplasmic reticulum</keyword>
<keyword id="KW-0325">Glycoprotein</keyword>
<keyword id="KW-1185">Reference proteome</keyword>
<keyword id="KW-0677">Repeat</keyword>
<keyword id="KW-0964">Secreted</keyword>
<keyword id="KW-0732">Signal</keyword>
<keyword id="KW-0802">TPR repeat</keyword>
<keyword id="KW-0834">Unfolded protein response</keyword>
<reference key="1">
    <citation type="journal article" date="2005" name="Nature">
        <title>The genome of the social amoeba Dictyostelium discoideum.</title>
        <authorList>
            <person name="Eichinger L."/>
            <person name="Pachebat J.A."/>
            <person name="Gloeckner G."/>
            <person name="Rajandream M.A."/>
            <person name="Sucgang R."/>
            <person name="Berriman M."/>
            <person name="Song J."/>
            <person name="Olsen R."/>
            <person name="Szafranski K."/>
            <person name="Xu Q."/>
            <person name="Tunggal B."/>
            <person name="Kummerfeld S."/>
            <person name="Madera M."/>
            <person name="Konfortov B.A."/>
            <person name="Rivero F."/>
            <person name="Bankier A.T."/>
            <person name="Lehmann R."/>
            <person name="Hamlin N."/>
            <person name="Davies R."/>
            <person name="Gaudet P."/>
            <person name="Fey P."/>
            <person name="Pilcher K."/>
            <person name="Chen G."/>
            <person name="Saunders D."/>
            <person name="Sodergren E.J."/>
            <person name="Davis P."/>
            <person name="Kerhornou A."/>
            <person name="Nie X."/>
            <person name="Hall N."/>
            <person name="Anjard C."/>
            <person name="Hemphill L."/>
            <person name="Bason N."/>
            <person name="Farbrother P."/>
            <person name="Desany B."/>
            <person name="Just E."/>
            <person name="Morio T."/>
            <person name="Rost R."/>
            <person name="Churcher C.M."/>
            <person name="Cooper J."/>
            <person name="Haydock S."/>
            <person name="van Driessche N."/>
            <person name="Cronin A."/>
            <person name="Goodhead I."/>
            <person name="Muzny D.M."/>
            <person name="Mourier T."/>
            <person name="Pain A."/>
            <person name="Lu M."/>
            <person name="Harper D."/>
            <person name="Lindsay R."/>
            <person name="Hauser H."/>
            <person name="James K.D."/>
            <person name="Quiles M."/>
            <person name="Madan Babu M."/>
            <person name="Saito T."/>
            <person name="Buchrieser C."/>
            <person name="Wardroper A."/>
            <person name="Felder M."/>
            <person name="Thangavelu M."/>
            <person name="Johnson D."/>
            <person name="Knights A."/>
            <person name="Loulseged H."/>
            <person name="Mungall K.L."/>
            <person name="Oliver K."/>
            <person name="Price C."/>
            <person name="Quail M.A."/>
            <person name="Urushihara H."/>
            <person name="Hernandez J."/>
            <person name="Rabbinowitsch E."/>
            <person name="Steffen D."/>
            <person name="Sanders M."/>
            <person name="Ma J."/>
            <person name="Kohara Y."/>
            <person name="Sharp S."/>
            <person name="Simmonds M.N."/>
            <person name="Spiegler S."/>
            <person name="Tivey A."/>
            <person name="Sugano S."/>
            <person name="White B."/>
            <person name="Walker D."/>
            <person name="Woodward J.R."/>
            <person name="Winckler T."/>
            <person name="Tanaka Y."/>
            <person name="Shaulsky G."/>
            <person name="Schleicher M."/>
            <person name="Weinstock G.M."/>
            <person name="Rosenthal A."/>
            <person name="Cox E.C."/>
            <person name="Chisholm R.L."/>
            <person name="Gibbs R.A."/>
            <person name="Loomis W.F."/>
            <person name="Platzer M."/>
            <person name="Kay R.R."/>
            <person name="Williams J.G."/>
            <person name="Dear P.H."/>
            <person name="Noegel A.A."/>
            <person name="Barrell B.G."/>
            <person name="Kuspa A."/>
        </authorList>
    </citation>
    <scope>NUCLEOTIDE SEQUENCE [LARGE SCALE GENOMIC DNA]</scope>
    <source>
        <strain>AX4</strain>
    </source>
</reference>
<sequence length="502" mass="57387">MIVNKKYFLLICIIILISINCLVLAKDEIENFLKEGDDLVSKGKYDLANENYSNAIDLIGSDTQHPQYVSLLFKRAGIYHQKGKNILALSDLNRAIEANPDNIHARLKRAKIQSSLGRFEEAMDEYKRVLKIRPDNSQAKQQIEKLKKVEQQLEKVRDMVKVEKNYKDSIAILLDIQSVVSDLKEVRLMLCECFFQQGDHRKVLDETMTILKSEPSSVAALYWRGKTFFSMGEKEIAMKFLKEGLKFDPDNTNCRAMIKTINKFEKSTANAQELFNQQKYQDALGQIEDALEIEPNSPTHSTPLYLLKCKCLLKVKKGKESIEACNRALELDELNADALYNRAEAYMYEEDYQKALNDYNKAREHKPNDPQIHDGIRRAQKAQQMAKRKDYYKILGIQKSATPEEIKKAFKKLAIKNHPDKSTETDKEKAQQIYMDINEAYEALKDEEKRKRYDMGEDINDPHGGQGGQGGGFGGFGGFHGFQGFQGFQQGGGGGGFQFHFR</sequence>
<name>DNJC3_DICDI</name>
<proteinExistence type="inferred from homology"/>
<comment type="function">
    <text evidence="1">May be involved in the unfolded protein response (UPR) during ER stress.</text>
</comment>
<comment type="subcellular location">
    <subcellularLocation>
        <location evidence="4">Secreted</location>
    </subcellularLocation>
    <subcellularLocation>
        <location evidence="1">Endoplasmic reticulum lumen</location>
    </subcellularLocation>
</comment>
<gene>
    <name type="primary">dnajc3</name>
    <name type="ORF">DDB_G0286251</name>
</gene>
<protein>
    <recommendedName>
        <fullName>DnaJ homolog subfamily C member 3 homolog</fullName>
    </recommendedName>
</protein>
<dbReference type="EMBL" id="AAFI02000085">
    <property type="protein sequence ID" value="EAL64301.1"/>
    <property type="molecule type" value="Genomic_DNA"/>
</dbReference>
<dbReference type="RefSeq" id="XP_637810.1">
    <property type="nucleotide sequence ID" value="XM_632718.1"/>
</dbReference>
<dbReference type="SMR" id="Q54M21"/>
<dbReference type="FunCoup" id="Q54M21">
    <property type="interactions" value="164"/>
</dbReference>
<dbReference type="STRING" id="44689.Q54M21"/>
<dbReference type="GlyCosmos" id="Q54M21">
    <property type="glycosylation" value="1 site, No reported glycans"/>
</dbReference>
<dbReference type="GlyGen" id="Q54M21">
    <property type="glycosylation" value="1 site"/>
</dbReference>
<dbReference type="PaxDb" id="44689-DDB0233602"/>
<dbReference type="EnsemblProtists" id="EAL64301">
    <property type="protein sequence ID" value="EAL64301"/>
    <property type="gene ID" value="DDB_G0286251"/>
</dbReference>
<dbReference type="GeneID" id="8625524"/>
<dbReference type="KEGG" id="ddi:DDB_G0286251"/>
<dbReference type="dictyBase" id="DDB_G0286251">
    <property type="gene designation" value="dnajc3"/>
</dbReference>
<dbReference type="VEuPathDB" id="AmoebaDB:DDB_G0286251"/>
<dbReference type="eggNOG" id="KOG0624">
    <property type="taxonomic scope" value="Eukaryota"/>
</dbReference>
<dbReference type="HOGENOM" id="CLU_015935_0_0_1"/>
<dbReference type="InParanoid" id="Q54M21"/>
<dbReference type="OMA" id="PFAHFQH"/>
<dbReference type="PhylomeDB" id="Q54M21"/>
<dbReference type="Reactome" id="R-DDI-6798695">
    <property type="pathway name" value="Neutrophil degranulation"/>
</dbReference>
<dbReference type="PRO" id="PR:Q54M21"/>
<dbReference type="Proteomes" id="UP000002195">
    <property type="component" value="Chromosome 4"/>
</dbReference>
<dbReference type="GO" id="GO:0005783">
    <property type="term" value="C:endoplasmic reticulum"/>
    <property type="evidence" value="ECO:0000318"/>
    <property type="project" value="GO_Central"/>
</dbReference>
<dbReference type="GO" id="GO:0005788">
    <property type="term" value="C:endoplasmic reticulum lumen"/>
    <property type="evidence" value="ECO:0007669"/>
    <property type="project" value="UniProtKB-SubCell"/>
</dbReference>
<dbReference type="GO" id="GO:0005576">
    <property type="term" value="C:extracellular region"/>
    <property type="evidence" value="ECO:0007669"/>
    <property type="project" value="UniProtKB-SubCell"/>
</dbReference>
<dbReference type="GO" id="GO:0051787">
    <property type="term" value="F:misfolded protein binding"/>
    <property type="evidence" value="ECO:0000318"/>
    <property type="project" value="GO_Central"/>
</dbReference>
<dbReference type="GO" id="GO:0051087">
    <property type="term" value="F:protein-folding chaperone binding"/>
    <property type="evidence" value="ECO:0000318"/>
    <property type="project" value="GO_Central"/>
</dbReference>
<dbReference type="GO" id="GO:0034975">
    <property type="term" value="P:protein folding in endoplasmic reticulum"/>
    <property type="evidence" value="ECO:0000318"/>
    <property type="project" value="GO_Central"/>
</dbReference>
<dbReference type="GO" id="GO:0006986">
    <property type="term" value="P:response to unfolded protein"/>
    <property type="evidence" value="ECO:0007669"/>
    <property type="project" value="UniProtKB-KW"/>
</dbReference>
<dbReference type="CDD" id="cd06257">
    <property type="entry name" value="DnaJ"/>
    <property type="match status" value="1"/>
</dbReference>
<dbReference type="FunFam" id="1.25.40.10:FF:000224">
    <property type="entry name" value="DnaJ and TPR domain protein"/>
    <property type="match status" value="1"/>
</dbReference>
<dbReference type="FunFam" id="1.10.287.110:FF:000055">
    <property type="entry name" value="DnaJ subfamily C member 7"/>
    <property type="match status" value="1"/>
</dbReference>
<dbReference type="Gene3D" id="1.10.287.110">
    <property type="entry name" value="DnaJ domain"/>
    <property type="match status" value="1"/>
</dbReference>
<dbReference type="Gene3D" id="1.25.40.10">
    <property type="entry name" value="Tetratricopeptide repeat domain"/>
    <property type="match status" value="1"/>
</dbReference>
<dbReference type="InterPro" id="IPR001623">
    <property type="entry name" value="DnaJ_domain"/>
</dbReference>
<dbReference type="InterPro" id="IPR018253">
    <property type="entry name" value="DnaJ_domain_CS"/>
</dbReference>
<dbReference type="InterPro" id="IPR036869">
    <property type="entry name" value="J_dom_sf"/>
</dbReference>
<dbReference type="InterPro" id="IPR011990">
    <property type="entry name" value="TPR-like_helical_dom_sf"/>
</dbReference>
<dbReference type="InterPro" id="IPR019734">
    <property type="entry name" value="TPR_rpt"/>
</dbReference>
<dbReference type="PANTHER" id="PTHR45188:SF2">
    <property type="entry name" value="DNAJ HOMOLOG SUBFAMILY C MEMBER 7"/>
    <property type="match status" value="1"/>
</dbReference>
<dbReference type="PANTHER" id="PTHR45188">
    <property type="entry name" value="DNAJ PROTEIN P58IPK HOMOLOG"/>
    <property type="match status" value="1"/>
</dbReference>
<dbReference type="Pfam" id="PF00226">
    <property type="entry name" value="DnaJ"/>
    <property type="match status" value="1"/>
</dbReference>
<dbReference type="Pfam" id="PF00515">
    <property type="entry name" value="TPR_1"/>
    <property type="match status" value="1"/>
</dbReference>
<dbReference type="Pfam" id="PF14559">
    <property type="entry name" value="TPR_19"/>
    <property type="match status" value="1"/>
</dbReference>
<dbReference type="Pfam" id="PF13181">
    <property type="entry name" value="TPR_8"/>
    <property type="match status" value="1"/>
</dbReference>
<dbReference type="PRINTS" id="PR00625">
    <property type="entry name" value="JDOMAIN"/>
</dbReference>
<dbReference type="SMART" id="SM00271">
    <property type="entry name" value="DnaJ"/>
    <property type="match status" value="1"/>
</dbReference>
<dbReference type="SMART" id="SM00028">
    <property type="entry name" value="TPR"/>
    <property type="match status" value="6"/>
</dbReference>
<dbReference type="SUPFAM" id="SSF46565">
    <property type="entry name" value="Chaperone J-domain"/>
    <property type="match status" value="1"/>
</dbReference>
<dbReference type="SUPFAM" id="SSF48452">
    <property type="entry name" value="TPR-like"/>
    <property type="match status" value="1"/>
</dbReference>
<dbReference type="PROSITE" id="PS00636">
    <property type="entry name" value="DNAJ_1"/>
    <property type="match status" value="1"/>
</dbReference>
<dbReference type="PROSITE" id="PS50076">
    <property type="entry name" value="DNAJ_2"/>
    <property type="match status" value="1"/>
</dbReference>
<dbReference type="PROSITE" id="PS50005">
    <property type="entry name" value="TPR"/>
    <property type="match status" value="8"/>
</dbReference>
<dbReference type="PROSITE" id="PS50293">
    <property type="entry name" value="TPR_REGION"/>
    <property type="match status" value="1"/>
</dbReference>
<accession>Q54M21</accession>
<evidence type="ECO:0000250" key="1"/>
<evidence type="ECO:0000255" key="2"/>
<evidence type="ECO:0000255" key="3">
    <source>
        <dbReference type="PROSITE-ProRule" id="PRU00286"/>
    </source>
</evidence>
<evidence type="ECO:0000305" key="4"/>
<organism>
    <name type="scientific">Dictyostelium discoideum</name>
    <name type="common">Social amoeba</name>
    <dbReference type="NCBI Taxonomy" id="44689"/>
    <lineage>
        <taxon>Eukaryota</taxon>
        <taxon>Amoebozoa</taxon>
        <taxon>Evosea</taxon>
        <taxon>Eumycetozoa</taxon>
        <taxon>Dictyostelia</taxon>
        <taxon>Dictyosteliales</taxon>
        <taxon>Dictyosteliaceae</taxon>
        <taxon>Dictyostelium</taxon>
    </lineage>
</organism>
<feature type="signal peptide" evidence="2">
    <location>
        <begin position="1"/>
        <end position="25"/>
    </location>
</feature>
<feature type="chain" id="PRO_0000328415" description="DnaJ homolog subfamily C member 3 homolog">
    <location>
        <begin position="26"/>
        <end position="502"/>
    </location>
</feature>
<feature type="repeat" description="TPR 1">
    <location>
        <begin position="29"/>
        <end position="62"/>
    </location>
</feature>
<feature type="repeat" description="TPR 2">
    <location>
        <begin position="69"/>
        <end position="102"/>
    </location>
</feature>
<feature type="repeat" description="TPR 3">
    <location>
        <begin position="103"/>
        <end position="136"/>
    </location>
</feature>
<feature type="repeat" description="TPR 4">
    <location>
        <begin position="184"/>
        <end position="217"/>
    </location>
</feature>
<feature type="repeat" description="TPR 5">
    <location>
        <begin position="218"/>
        <end position="251"/>
    </location>
</feature>
<feature type="repeat" description="TPR 6">
    <location>
        <begin position="264"/>
        <end position="297"/>
    </location>
</feature>
<feature type="repeat" description="TPR 7">
    <location>
        <begin position="302"/>
        <end position="335"/>
    </location>
</feature>
<feature type="repeat" description="TPR 8">
    <location>
        <begin position="336"/>
        <end position="369"/>
    </location>
</feature>
<feature type="domain" description="J" evidence="3">
    <location>
        <begin position="390"/>
        <end position="457"/>
    </location>
</feature>
<feature type="glycosylation site" description="N-linked (GlcNAc...) asparagine" evidence="2">
    <location>
        <position position="51"/>
    </location>
</feature>
<feature type="disulfide bond" evidence="1">
    <location>
        <begin position="309"/>
        <end position="325"/>
    </location>
</feature>